<comment type="similarity">
    <text evidence="1">Belongs to the UPF0145 family.</text>
</comment>
<keyword id="KW-1185">Reference proteome</keyword>
<reference key="1">
    <citation type="journal article" date="2015" name="Microbiology">
        <title>Genome of Methanoregula boonei 6A8 reveals adaptations to oligotrophic peatland environments.</title>
        <authorList>
            <person name="Braeuer S."/>
            <person name="Cadillo-Quiroz H."/>
            <person name="Kyrpides N."/>
            <person name="Woyke T."/>
            <person name="Goodwin L."/>
            <person name="Detter C."/>
            <person name="Podell S."/>
            <person name="Yavitt J.B."/>
            <person name="Zinder S.H."/>
        </authorList>
    </citation>
    <scope>NUCLEOTIDE SEQUENCE [LARGE SCALE GENOMIC DNA]</scope>
    <source>
        <strain>DSM 21154 / JCM 14090 / 6A8</strain>
    </source>
</reference>
<protein>
    <recommendedName>
        <fullName evidence="1">UPF0145 protein Mboo_1021</fullName>
    </recommendedName>
</protein>
<feature type="chain" id="PRO_1000013014" description="UPF0145 protein Mboo_1021">
    <location>
        <begin position="1"/>
        <end position="120"/>
    </location>
</feature>
<sequence length="120" mass="12667">MSDEIIVVSTPYLPGHKITKTLGFTWGLIVRSRGLGRNITAGLRSLAGGEIHEYTQLLNQSRQEALDRLKEHAATMGANAVIGVSFDSSETGGVMTEVLAYGTAVVVEPETGAASPVRLG</sequence>
<organism>
    <name type="scientific">Methanoregula boonei (strain DSM 21154 / JCM 14090 / 6A8)</name>
    <dbReference type="NCBI Taxonomy" id="456442"/>
    <lineage>
        <taxon>Archaea</taxon>
        <taxon>Methanobacteriati</taxon>
        <taxon>Methanobacteriota</taxon>
        <taxon>Stenosarchaea group</taxon>
        <taxon>Methanomicrobia</taxon>
        <taxon>Methanomicrobiales</taxon>
        <taxon>Methanoregulaceae</taxon>
        <taxon>Methanoregula</taxon>
    </lineage>
</organism>
<proteinExistence type="inferred from homology"/>
<accession>A7I728</accession>
<name>Y1021_METB6</name>
<dbReference type="EMBL" id="CP000780">
    <property type="protein sequence ID" value="ABS55539.1"/>
    <property type="molecule type" value="Genomic_DNA"/>
</dbReference>
<dbReference type="RefSeq" id="WP_012106566.1">
    <property type="nucleotide sequence ID" value="NC_009712.1"/>
</dbReference>
<dbReference type="SMR" id="A7I728"/>
<dbReference type="STRING" id="456442.Mboo_1021"/>
<dbReference type="GeneID" id="5411484"/>
<dbReference type="KEGG" id="mbn:Mboo_1021"/>
<dbReference type="eggNOG" id="arCOG02287">
    <property type="taxonomic scope" value="Archaea"/>
</dbReference>
<dbReference type="HOGENOM" id="CLU_117144_1_1_2"/>
<dbReference type="OrthoDB" id="59443at2157"/>
<dbReference type="Proteomes" id="UP000002408">
    <property type="component" value="Chromosome"/>
</dbReference>
<dbReference type="Gene3D" id="3.30.110.70">
    <property type="entry name" value="Hypothetical protein apc22750. Chain B"/>
    <property type="match status" value="1"/>
</dbReference>
<dbReference type="HAMAP" id="MF_00338">
    <property type="entry name" value="UPF0145"/>
    <property type="match status" value="1"/>
</dbReference>
<dbReference type="InterPro" id="IPR035439">
    <property type="entry name" value="UPF0145_dom_sf"/>
</dbReference>
<dbReference type="InterPro" id="IPR002765">
    <property type="entry name" value="UPF0145_YbjQ-like"/>
</dbReference>
<dbReference type="PANTHER" id="PTHR34068:SF2">
    <property type="entry name" value="UPF0145 PROTEIN SCO3412"/>
    <property type="match status" value="1"/>
</dbReference>
<dbReference type="PANTHER" id="PTHR34068">
    <property type="entry name" value="UPF0145 PROTEIN YBJQ"/>
    <property type="match status" value="1"/>
</dbReference>
<dbReference type="Pfam" id="PF01906">
    <property type="entry name" value="YbjQ_1"/>
    <property type="match status" value="1"/>
</dbReference>
<dbReference type="SUPFAM" id="SSF117782">
    <property type="entry name" value="YbjQ-like"/>
    <property type="match status" value="1"/>
</dbReference>
<gene>
    <name type="ordered locus">Mboo_1021</name>
</gene>
<evidence type="ECO:0000255" key="1">
    <source>
        <dbReference type="HAMAP-Rule" id="MF_00338"/>
    </source>
</evidence>